<proteinExistence type="inferred from homology"/>
<feature type="chain" id="PRO_0000139911" description="Ribonuclease PH">
    <location>
        <begin position="1"/>
        <end position="259"/>
    </location>
</feature>
<feature type="binding site" evidence="1">
    <location>
        <position position="88"/>
    </location>
    <ligand>
        <name>phosphate</name>
        <dbReference type="ChEBI" id="CHEBI:43474"/>
        <note>substrate</note>
    </ligand>
</feature>
<feature type="binding site" evidence="1">
    <location>
        <begin position="126"/>
        <end position="128"/>
    </location>
    <ligand>
        <name>phosphate</name>
        <dbReference type="ChEBI" id="CHEBI:43474"/>
        <note>substrate</note>
    </ligand>
</feature>
<accession>Q73X87</accession>
<name>RNPH_MYCPA</name>
<dbReference type="EC" id="2.7.7.56" evidence="1"/>
<dbReference type="EMBL" id="AE016958">
    <property type="protein sequence ID" value="AAS04739.1"/>
    <property type="molecule type" value="Genomic_DNA"/>
</dbReference>
<dbReference type="RefSeq" id="WP_003873193.1">
    <property type="nucleotide sequence ID" value="NZ_CP106873.1"/>
</dbReference>
<dbReference type="SMR" id="Q73X87"/>
<dbReference type="STRING" id="262316.MAP_2422c"/>
<dbReference type="GeneID" id="75269323"/>
<dbReference type="KEGG" id="mpa:MAP_2422c"/>
<dbReference type="eggNOG" id="COG2123">
    <property type="taxonomic scope" value="Bacteria"/>
</dbReference>
<dbReference type="HOGENOM" id="CLU_050858_0_0_11"/>
<dbReference type="Proteomes" id="UP000000580">
    <property type="component" value="Chromosome"/>
</dbReference>
<dbReference type="GO" id="GO:0000175">
    <property type="term" value="F:3'-5'-RNA exonuclease activity"/>
    <property type="evidence" value="ECO:0007669"/>
    <property type="project" value="UniProtKB-UniRule"/>
</dbReference>
<dbReference type="GO" id="GO:0000049">
    <property type="term" value="F:tRNA binding"/>
    <property type="evidence" value="ECO:0007669"/>
    <property type="project" value="UniProtKB-UniRule"/>
</dbReference>
<dbReference type="GO" id="GO:0009022">
    <property type="term" value="F:tRNA nucleotidyltransferase activity"/>
    <property type="evidence" value="ECO:0007669"/>
    <property type="project" value="UniProtKB-UniRule"/>
</dbReference>
<dbReference type="GO" id="GO:0016075">
    <property type="term" value="P:rRNA catabolic process"/>
    <property type="evidence" value="ECO:0007669"/>
    <property type="project" value="UniProtKB-UniRule"/>
</dbReference>
<dbReference type="GO" id="GO:0006364">
    <property type="term" value="P:rRNA processing"/>
    <property type="evidence" value="ECO:0007669"/>
    <property type="project" value="UniProtKB-KW"/>
</dbReference>
<dbReference type="GO" id="GO:0008033">
    <property type="term" value="P:tRNA processing"/>
    <property type="evidence" value="ECO:0007669"/>
    <property type="project" value="UniProtKB-UniRule"/>
</dbReference>
<dbReference type="CDD" id="cd11362">
    <property type="entry name" value="RNase_PH_bact"/>
    <property type="match status" value="1"/>
</dbReference>
<dbReference type="FunFam" id="3.30.230.70:FF:000003">
    <property type="entry name" value="Ribonuclease PH"/>
    <property type="match status" value="1"/>
</dbReference>
<dbReference type="Gene3D" id="3.30.230.70">
    <property type="entry name" value="GHMP Kinase, N-terminal domain"/>
    <property type="match status" value="1"/>
</dbReference>
<dbReference type="HAMAP" id="MF_00564">
    <property type="entry name" value="RNase_PH"/>
    <property type="match status" value="1"/>
</dbReference>
<dbReference type="InterPro" id="IPR001247">
    <property type="entry name" value="ExoRNase_PH_dom1"/>
</dbReference>
<dbReference type="InterPro" id="IPR015847">
    <property type="entry name" value="ExoRNase_PH_dom2"/>
</dbReference>
<dbReference type="InterPro" id="IPR036345">
    <property type="entry name" value="ExoRNase_PH_dom2_sf"/>
</dbReference>
<dbReference type="InterPro" id="IPR027408">
    <property type="entry name" value="PNPase/RNase_PH_dom_sf"/>
</dbReference>
<dbReference type="InterPro" id="IPR020568">
    <property type="entry name" value="Ribosomal_Su5_D2-typ_SF"/>
</dbReference>
<dbReference type="InterPro" id="IPR050080">
    <property type="entry name" value="RNase_PH"/>
</dbReference>
<dbReference type="InterPro" id="IPR002381">
    <property type="entry name" value="RNase_PH_bac-type"/>
</dbReference>
<dbReference type="InterPro" id="IPR018336">
    <property type="entry name" value="RNase_PH_CS"/>
</dbReference>
<dbReference type="NCBIfam" id="TIGR01966">
    <property type="entry name" value="RNasePH"/>
    <property type="match status" value="1"/>
</dbReference>
<dbReference type="PANTHER" id="PTHR11953">
    <property type="entry name" value="EXOSOME COMPLEX COMPONENT"/>
    <property type="match status" value="1"/>
</dbReference>
<dbReference type="PANTHER" id="PTHR11953:SF0">
    <property type="entry name" value="EXOSOME COMPLEX COMPONENT RRP41"/>
    <property type="match status" value="1"/>
</dbReference>
<dbReference type="Pfam" id="PF01138">
    <property type="entry name" value="RNase_PH"/>
    <property type="match status" value="1"/>
</dbReference>
<dbReference type="Pfam" id="PF03725">
    <property type="entry name" value="RNase_PH_C"/>
    <property type="match status" value="1"/>
</dbReference>
<dbReference type="SUPFAM" id="SSF55666">
    <property type="entry name" value="Ribonuclease PH domain 2-like"/>
    <property type="match status" value="1"/>
</dbReference>
<dbReference type="SUPFAM" id="SSF54211">
    <property type="entry name" value="Ribosomal protein S5 domain 2-like"/>
    <property type="match status" value="1"/>
</dbReference>
<dbReference type="PROSITE" id="PS01277">
    <property type="entry name" value="RIBONUCLEASE_PH"/>
    <property type="match status" value="1"/>
</dbReference>
<gene>
    <name evidence="1" type="primary">rph</name>
    <name type="synonym">rphA</name>
    <name type="ordered locus">MAP_2422c</name>
</gene>
<evidence type="ECO:0000255" key="1">
    <source>
        <dbReference type="HAMAP-Rule" id="MF_00564"/>
    </source>
</evidence>
<keyword id="KW-0548">Nucleotidyltransferase</keyword>
<keyword id="KW-1185">Reference proteome</keyword>
<keyword id="KW-0694">RNA-binding</keyword>
<keyword id="KW-0698">rRNA processing</keyword>
<keyword id="KW-0808">Transferase</keyword>
<keyword id="KW-0819">tRNA processing</keyword>
<keyword id="KW-0820">tRNA-binding</keyword>
<organism>
    <name type="scientific">Mycolicibacterium paratuberculosis (strain ATCC BAA-968 / K-10)</name>
    <name type="common">Mycobacterium paratuberculosis</name>
    <dbReference type="NCBI Taxonomy" id="262316"/>
    <lineage>
        <taxon>Bacteria</taxon>
        <taxon>Bacillati</taxon>
        <taxon>Actinomycetota</taxon>
        <taxon>Actinomycetes</taxon>
        <taxon>Mycobacteriales</taxon>
        <taxon>Mycobacteriaceae</taxon>
        <taxon>Mycobacterium</taxon>
        <taxon>Mycobacterium avium complex (MAC)</taxon>
    </lineage>
</organism>
<reference key="1">
    <citation type="journal article" date="2005" name="Proc. Natl. Acad. Sci. U.S.A.">
        <title>The complete genome sequence of Mycobacterium avium subspecies paratuberculosis.</title>
        <authorList>
            <person name="Li L."/>
            <person name="Bannantine J.P."/>
            <person name="Zhang Q."/>
            <person name="Amonsin A."/>
            <person name="May B.J."/>
            <person name="Alt D."/>
            <person name="Banerji N."/>
            <person name="Kanjilal S."/>
            <person name="Kapur V."/>
        </authorList>
    </citation>
    <scope>NUCLEOTIDE SEQUENCE [LARGE SCALE GENOMIC DNA]</scope>
    <source>
        <strain>ATCC BAA-968 / K-10</strain>
    </source>
</reference>
<sequence>MTRREDGRLDDELRPLVITRGFTEHPAGSVLIEFGHTKVMCTASVTEGVPRWRKGSGLGWLTAEYAMLPSATHTRSDRESVKGRLSGRTQEISRLIGRSLRACIDLAALGENTIAVDCDVLQADGGTRTAAITGAFVALADAVTYLSAAGKLSDPRPLSCAIAAVSVGVVDGRIRVDLPYEEDARAEVDMNVVATDTGTLVEVQGTGEGATFPRSTLDKLLDAALAACDKLFAAQREALKLPYPGVLPEGPPPPKAFGS</sequence>
<comment type="function">
    <text evidence="1">Phosphorolytic 3'-5' exoribonuclease that plays an important role in tRNA 3'-end maturation. Removes nucleotide residues following the 3'-CCA terminus of tRNAs; can also add nucleotides to the ends of RNA molecules by using nucleoside diphosphates as substrates, but this may not be physiologically important. Probably plays a role in initiation of 16S rRNA degradation (leading to ribosome degradation) during starvation.</text>
</comment>
<comment type="catalytic activity">
    <reaction evidence="1">
        <text>tRNA(n+1) + phosphate = tRNA(n) + a ribonucleoside 5'-diphosphate</text>
        <dbReference type="Rhea" id="RHEA:10628"/>
        <dbReference type="Rhea" id="RHEA-COMP:17343"/>
        <dbReference type="Rhea" id="RHEA-COMP:17344"/>
        <dbReference type="ChEBI" id="CHEBI:43474"/>
        <dbReference type="ChEBI" id="CHEBI:57930"/>
        <dbReference type="ChEBI" id="CHEBI:173114"/>
        <dbReference type="EC" id="2.7.7.56"/>
    </reaction>
</comment>
<comment type="subunit">
    <text evidence="1">Homohexameric ring arranged as a trimer of dimers.</text>
</comment>
<comment type="similarity">
    <text evidence="1">Belongs to the RNase PH family.</text>
</comment>
<protein>
    <recommendedName>
        <fullName evidence="1">Ribonuclease PH</fullName>
        <shortName evidence="1">RNase PH</shortName>
        <ecNumber evidence="1">2.7.7.56</ecNumber>
    </recommendedName>
    <alternativeName>
        <fullName evidence="1">tRNA nucleotidyltransferase</fullName>
    </alternativeName>
</protein>